<proteinExistence type="inferred from homology"/>
<accession>Q1ACI0</accession>
<reference key="1">
    <citation type="journal article" date="2006" name="Mol. Biol. Evol.">
        <title>The chloroplast genome sequence of Chara vulgaris sheds new light into the closest green algal relatives of land plants.</title>
        <authorList>
            <person name="Turmel M."/>
            <person name="Otis C."/>
            <person name="Lemieux C."/>
        </authorList>
    </citation>
    <scope>NUCLEOTIDE SEQUENCE [LARGE SCALE GENOMIC DNA]</scope>
</reference>
<protein>
    <recommendedName>
        <fullName evidence="1">Large ribosomal subunit protein bL33c</fullName>
    </recommendedName>
    <alternativeName>
        <fullName evidence="2">50S ribosomal protein L33, chloroplastic</fullName>
    </alternativeName>
</protein>
<sequence>MAKSKDTRITIILECNICSNNKKSNFPKSSRYTTQKNRRNTPNRLILKKFCSNCQQHTIYNEIKK</sequence>
<organism>
    <name type="scientific">Chara vulgaris</name>
    <name type="common">Common stonewort</name>
    <dbReference type="NCBI Taxonomy" id="55564"/>
    <lineage>
        <taxon>Eukaryota</taxon>
        <taxon>Viridiplantae</taxon>
        <taxon>Streptophyta</taxon>
        <taxon>Charophyceae</taxon>
        <taxon>Charales</taxon>
        <taxon>Characeae</taxon>
        <taxon>Chara</taxon>
    </lineage>
</organism>
<name>RK33_CHAVU</name>
<evidence type="ECO:0000255" key="1">
    <source>
        <dbReference type="HAMAP-Rule" id="MF_00294"/>
    </source>
</evidence>
<evidence type="ECO:0000305" key="2"/>
<dbReference type="EMBL" id="DQ229107">
    <property type="protein sequence ID" value="ABA61948.1"/>
    <property type="molecule type" value="Genomic_DNA"/>
</dbReference>
<dbReference type="RefSeq" id="YP_635767.1">
    <property type="nucleotide sequence ID" value="NC_008097.1"/>
</dbReference>
<dbReference type="GeneID" id="4100314"/>
<dbReference type="GO" id="GO:0009507">
    <property type="term" value="C:chloroplast"/>
    <property type="evidence" value="ECO:0007669"/>
    <property type="project" value="UniProtKB-SubCell"/>
</dbReference>
<dbReference type="GO" id="GO:1990904">
    <property type="term" value="C:ribonucleoprotein complex"/>
    <property type="evidence" value="ECO:0007669"/>
    <property type="project" value="UniProtKB-KW"/>
</dbReference>
<dbReference type="GO" id="GO:0005840">
    <property type="term" value="C:ribosome"/>
    <property type="evidence" value="ECO:0007669"/>
    <property type="project" value="UniProtKB-KW"/>
</dbReference>
<dbReference type="GO" id="GO:0003735">
    <property type="term" value="F:structural constituent of ribosome"/>
    <property type="evidence" value="ECO:0007669"/>
    <property type="project" value="InterPro"/>
</dbReference>
<dbReference type="GO" id="GO:0006412">
    <property type="term" value="P:translation"/>
    <property type="evidence" value="ECO:0007669"/>
    <property type="project" value="UniProtKB-UniRule"/>
</dbReference>
<dbReference type="Gene3D" id="2.20.28.120">
    <property type="entry name" value="Ribosomal protein L33"/>
    <property type="match status" value="1"/>
</dbReference>
<dbReference type="HAMAP" id="MF_00294">
    <property type="entry name" value="Ribosomal_bL33"/>
    <property type="match status" value="1"/>
</dbReference>
<dbReference type="InterPro" id="IPR001705">
    <property type="entry name" value="Ribosomal_bL33"/>
</dbReference>
<dbReference type="InterPro" id="IPR018264">
    <property type="entry name" value="Ribosomal_bL33_CS"/>
</dbReference>
<dbReference type="InterPro" id="IPR038584">
    <property type="entry name" value="Ribosomal_bL33_sf"/>
</dbReference>
<dbReference type="InterPro" id="IPR011332">
    <property type="entry name" value="Ribosomal_zn-bd"/>
</dbReference>
<dbReference type="NCBIfam" id="NF001764">
    <property type="entry name" value="PRK00504.1"/>
    <property type="match status" value="1"/>
</dbReference>
<dbReference type="NCBIfam" id="NF001860">
    <property type="entry name" value="PRK00595.1"/>
    <property type="match status" value="1"/>
</dbReference>
<dbReference type="NCBIfam" id="TIGR01023">
    <property type="entry name" value="rpmG_bact"/>
    <property type="match status" value="1"/>
</dbReference>
<dbReference type="PANTHER" id="PTHR43168">
    <property type="entry name" value="50S RIBOSOMAL PROTEIN L33, CHLOROPLASTIC"/>
    <property type="match status" value="1"/>
</dbReference>
<dbReference type="PANTHER" id="PTHR43168:SF2">
    <property type="entry name" value="LARGE RIBOSOMAL SUBUNIT PROTEIN BL33C"/>
    <property type="match status" value="1"/>
</dbReference>
<dbReference type="Pfam" id="PF00471">
    <property type="entry name" value="Ribosomal_L33"/>
    <property type="match status" value="1"/>
</dbReference>
<dbReference type="SUPFAM" id="SSF57829">
    <property type="entry name" value="Zn-binding ribosomal proteins"/>
    <property type="match status" value="1"/>
</dbReference>
<dbReference type="PROSITE" id="PS00582">
    <property type="entry name" value="RIBOSOMAL_L33"/>
    <property type="match status" value="1"/>
</dbReference>
<gene>
    <name evidence="1" type="primary">rpl33</name>
</gene>
<comment type="subcellular location">
    <subcellularLocation>
        <location>Plastid</location>
        <location>Chloroplast</location>
    </subcellularLocation>
</comment>
<comment type="similarity">
    <text evidence="1">Belongs to the bacterial ribosomal protein bL33 family.</text>
</comment>
<feature type="chain" id="PRO_0000276495" description="Large ribosomal subunit protein bL33c">
    <location>
        <begin position="1"/>
        <end position="65"/>
    </location>
</feature>
<geneLocation type="chloroplast"/>
<keyword id="KW-0150">Chloroplast</keyword>
<keyword id="KW-0934">Plastid</keyword>
<keyword id="KW-0687">Ribonucleoprotein</keyword>
<keyword id="KW-0689">Ribosomal protein</keyword>